<protein>
    <recommendedName>
        <fullName evidence="1">Aspartate/glutamate leucyltransferase</fullName>
        <ecNumber evidence="1">2.3.2.29</ecNumber>
    </recommendedName>
</protein>
<organism>
    <name type="scientific">Gluconobacter oxydans (strain 621H)</name>
    <name type="common">Gluconobacter suboxydans</name>
    <dbReference type="NCBI Taxonomy" id="290633"/>
    <lineage>
        <taxon>Bacteria</taxon>
        <taxon>Pseudomonadati</taxon>
        <taxon>Pseudomonadota</taxon>
        <taxon>Alphaproteobacteria</taxon>
        <taxon>Acetobacterales</taxon>
        <taxon>Acetobacteraceae</taxon>
        <taxon>Gluconobacter</taxon>
    </lineage>
</organism>
<accession>Q5FUV3</accession>
<dbReference type="EC" id="2.3.2.29" evidence="1"/>
<dbReference type="EMBL" id="CP000009">
    <property type="protein sequence ID" value="AAW59869.1"/>
    <property type="molecule type" value="Genomic_DNA"/>
</dbReference>
<dbReference type="RefSeq" id="WP_011251673.1">
    <property type="nucleotide sequence ID" value="NC_006677.1"/>
</dbReference>
<dbReference type="SMR" id="Q5FUV3"/>
<dbReference type="STRING" id="290633.GOX0072"/>
<dbReference type="KEGG" id="gox:GOX0072"/>
<dbReference type="eggNOG" id="COG2935">
    <property type="taxonomic scope" value="Bacteria"/>
</dbReference>
<dbReference type="HOGENOM" id="CLU_077607_1_0_5"/>
<dbReference type="Proteomes" id="UP000006375">
    <property type="component" value="Chromosome"/>
</dbReference>
<dbReference type="GO" id="GO:0005737">
    <property type="term" value="C:cytoplasm"/>
    <property type="evidence" value="ECO:0007669"/>
    <property type="project" value="UniProtKB-SubCell"/>
</dbReference>
<dbReference type="GO" id="GO:0004057">
    <property type="term" value="F:arginyl-tRNA--protein transferase activity"/>
    <property type="evidence" value="ECO:0007669"/>
    <property type="project" value="InterPro"/>
</dbReference>
<dbReference type="GO" id="GO:0008914">
    <property type="term" value="F:leucyl-tRNA--protein transferase activity"/>
    <property type="evidence" value="ECO:0007669"/>
    <property type="project" value="UniProtKB-UniRule"/>
</dbReference>
<dbReference type="GO" id="GO:0071596">
    <property type="term" value="P:ubiquitin-dependent protein catabolic process via the N-end rule pathway"/>
    <property type="evidence" value="ECO:0007669"/>
    <property type="project" value="InterPro"/>
</dbReference>
<dbReference type="HAMAP" id="MF_00689">
    <property type="entry name" value="Bpt"/>
    <property type="match status" value="1"/>
</dbReference>
<dbReference type="InterPro" id="IPR016181">
    <property type="entry name" value="Acyl_CoA_acyltransferase"/>
</dbReference>
<dbReference type="InterPro" id="IPR017138">
    <property type="entry name" value="Asp_Glu_LeuTrfase"/>
</dbReference>
<dbReference type="InterPro" id="IPR030700">
    <property type="entry name" value="N-end_Aminoacyl_Trfase"/>
</dbReference>
<dbReference type="InterPro" id="IPR007472">
    <property type="entry name" value="N-end_Aminoacyl_Trfase_C"/>
</dbReference>
<dbReference type="InterPro" id="IPR007471">
    <property type="entry name" value="N-end_Aminoacyl_Trfase_N"/>
</dbReference>
<dbReference type="NCBIfam" id="NF002341">
    <property type="entry name" value="PRK01305.1-1"/>
    <property type="match status" value="1"/>
</dbReference>
<dbReference type="NCBIfam" id="NF002343">
    <property type="entry name" value="PRK01305.1-4"/>
    <property type="match status" value="1"/>
</dbReference>
<dbReference type="NCBIfam" id="NF002346">
    <property type="entry name" value="PRK01305.2-3"/>
    <property type="match status" value="1"/>
</dbReference>
<dbReference type="PANTHER" id="PTHR21367">
    <property type="entry name" value="ARGININE-TRNA-PROTEIN TRANSFERASE 1"/>
    <property type="match status" value="1"/>
</dbReference>
<dbReference type="PANTHER" id="PTHR21367:SF1">
    <property type="entry name" value="ARGINYL-TRNA--PROTEIN TRANSFERASE 1"/>
    <property type="match status" value="1"/>
</dbReference>
<dbReference type="Pfam" id="PF04377">
    <property type="entry name" value="ATE_C"/>
    <property type="match status" value="1"/>
</dbReference>
<dbReference type="Pfam" id="PF04376">
    <property type="entry name" value="ATE_N"/>
    <property type="match status" value="1"/>
</dbReference>
<dbReference type="PIRSF" id="PIRSF037208">
    <property type="entry name" value="ATE_pro_prd"/>
    <property type="match status" value="1"/>
</dbReference>
<dbReference type="SUPFAM" id="SSF55729">
    <property type="entry name" value="Acyl-CoA N-acyltransferases (Nat)"/>
    <property type="match status" value="1"/>
</dbReference>
<name>BPT_GLUOX</name>
<feature type="chain" id="PRO_0000263185" description="Aspartate/glutamate leucyltransferase">
    <location>
        <begin position="1"/>
        <end position="240"/>
    </location>
</feature>
<gene>
    <name evidence="1" type="primary">bpt</name>
    <name type="ordered locus">GOX0072</name>
</gene>
<evidence type="ECO:0000255" key="1">
    <source>
        <dbReference type="HAMAP-Rule" id="MF_00689"/>
    </source>
</evidence>
<sequence>MQHRPQLFYTTAPAPCPYLPDRTERKVLTELAGPDAVALHNRLSQAGFRRSHAIAYAPVCVGCRACTPMRIPAATFAPTRTQKKIRSRHTDLVVNIIPPVPTDEQFRLFEMYQAVRHPDGDMAHMCWRDYAELIANTPVETFLAEFRRPDGTLVCVSLMDRLSDGLSAVYTFYDVNDLTASWGTFSILWLIEETARLGLEHLYLGYYVPGSPKMAYKAAFGPPEVFRDGQWSLLAALSPA</sequence>
<comment type="function">
    <text evidence="1">Functions in the N-end rule pathway of protein degradation where it conjugates Leu from its aminoacyl-tRNA to the N-termini of proteins containing an N-terminal aspartate or glutamate.</text>
</comment>
<comment type="catalytic activity">
    <reaction evidence="1">
        <text>N-terminal L-glutamyl-[protein] + L-leucyl-tRNA(Leu) = N-terminal L-leucyl-L-glutamyl-[protein] + tRNA(Leu) + H(+)</text>
        <dbReference type="Rhea" id="RHEA:50412"/>
        <dbReference type="Rhea" id="RHEA-COMP:9613"/>
        <dbReference type="Rhea" id="RHEA-COMP:9622"/>
        <dbReference type="Rhea" id="RHEA-COMP:12664"/>
        <dbReference type="Rhea" id="RHEA-COMP:12668"/>
        <dbReference type="ChEBI" id="CHEBI:15378"/>
        <dbReference type="ChEBI" id="CHEBI:64721"/>
        <dbReference type="ChEBI" id="CHEBI:78442"/>
        <dbReference type="ChEBI" id="CHEBI:78494"/>
        <dbReference type="ChEBI" id="CHEBI:133041"/>
        <dbReference type="EC" id="2.3.2.29"/>
    </reaction>
</comment>
<comment type="catalytic activity">
    <reaction evidence="1">
        <text>N-terminal L-aspartyl-[protein] + L-leucyl-tRNA(Leu) = N-terminal L-leucyl-L-aspartyl-[protein] + tRNA(Leu) + H(+)</text>
        <dbReference type="Rhea" id="RHEA:50420"/>
        <dbReference type="Rhea" id="RHEA-COMP:9613"/>
        <dbReference type="Rhea" id="RHEA-COMP:9622"/>
        <dbReference type="Rhea" id="RHEA-COMP:12669"/>
        <dbReference type="Rhea" id="RHEA-COMP:12674"/>
        <dbReference type="ChEBI" id="CHEBI:15378"/>
        <dbReference type="ChEBI" id="CHEBI:64720"/>
        <dbReference type="ChEBI" id="CHEBI:78442"/>
        <dbReference type="ChEBI" id="CHEBI:78494"/>
        <dbReference type="ChEBI" id="CHEBI:133042"/>
        <dbReference type="EC" id="2.3.2.29"/>
    </reaction>
</comment>
<comment type="subcellular location">
    <subcellularLocation>
        <location evidence="1">Cytoplasm</location>
    </subcellularLocation>
</comment>
<comment type="similarity">
    <text evidence="1">Belongs to the R-transferase family. Bpt subfamily.</text>
</comment>
<proteinExistence type="inferred from homology"/>
<keyword id="KW-0012">Acyltransferase</keyword>
<keyword id="KW-0963">Cytoplasm</keyword>
<keyword id="KW-1185">Reference proteome</keyword>
<keyword id="KW-0808">Transferase</keyword>
<reference key="1">
    <citation type="journal article" date="2005" name="Nat. Biotechnol.">
        <title>Complete genome sequence of the acetic acid bacterium Gluconobacter oxydans.</title>
        <authorList>
            <person name="Prust C."/>
            <person name="Hoffmeister M."/>
            <person name="Liesegang H."/>
            <person name="Wiezer A."/>
            <person name="Fricke W.F."/>
            <person name="Ehrenreich A."/>
            <person name="Gottschalk G."/>
            <person name="Deppenmeier U."/>
        </authorList>
    </citation>
    <scope>NUCLEOTIDE SEQUENCE [LARGE SCALE GENOMIC DNA]</scope>
    <source>
        <strain>621H</strain>
    </source>
</reference>